<name>PHLB_PHLPR</name>
<comment type="subcellular location">
    <subcellularLocation>
        <location>Secreted</location>
    </subcellularLocation>
</comment>
<comment type="allergen">
    <text>Causes an allergic reaction in human. Binds to IgE.</text>
</comment>
<comment type="similarity">
    <text evidence="3">Belongs to the Ole e I family.</text>
</comment>
<keyword id="KW-0020">Allergen</keyword>
<keyword id="KW-0903">Direct protein sequencing</keyword>
<keyword id="KW-1015">Disulfide bond</keyword>
<keyword id="KW-0325">Glycoprotein</keyword>
<keyword id="KW-0964">Secreted</keyword>
<accession>Q8H6L7</accession>
<evidence type="ECO:0000250" key="1"/>
<evidence type="ECO:0000255" key="2"/>
<evidence type="ECO:0000305" key="3"/>
<reference key="1">
    <citation type="journal article" date="2002" name="Clin. Exp. Allergy">
        <title>Molecular and immunological characterization of a novel timothy grass (Phleum pratense) pollen allergen, Phl p 11.</title>
        <authorList>
            <person name="Marknell DeWitt A."/>
            <person name="Niederberger V."/>
            <person name="Lehtonen P."/>
            <person name="Spitzauer S."/>
            <person name="Sperr W.R."/>
            <person name="Valent P."/>
            <person name="Valenta R."/>
            <person name="Lidholm J."/>
        </authorList>
    </citation>
    <scope>NUCLEOTIDE SEQUENCE [MRNA]</scope>
    <scope>PARTIAL PROTEIN SEQUENCE</scope>
    <source>
        <tissue>Pollen</tissue>
    </source>
</reference>
<sequence length="143" mass="15779">DKGPGFVVTGRVYCDPCRAGFETNVSHNVQGATVAVDCRPFNGGESKLKAEATTDGLGWYKIEIDQDHQEEICEVVLAKSPDTTCSEIEEFRDRARVPLTSNNGIKQQGIRYANPIAFFRKEPLKECGGILQAYDLRDAPETP</sequence>
<feature type="chain" id="PRO_0000215116" description="Pollen allergen Phl p 11">
    <location>
        <begin position="1"/>
        <end position="143"/>
    </location>
</feature>
<feature type="glycosylation site" description="N-linked (GlcNAc...) asparagine" evidence="2">
    <location>
        <position position="24"/>
    </location>
</feature>
<feature type="disulfide bond" evidence="1">
    <location>
        <begin position="14"/>
        <end position="85"/>
    </location>
</feature>
<feature type="disulfide bond" evidence="1">
    <location>
        <begin position="17"/>
        <end position="127"/>
    </location>
</feature>
<feature type="disulfide bond" evidence="1">
    <location>
        <begin position="38"/>
        <end position="73"/>
    </location>
</feature>
<protein>
    <recommendedName>
        <fullName>Pollen allergen Phl p 11</fullName>
    </recommendedName>
    <allergenName>Phl p 11</allergenName>
</protein>
<proteinExistence type="evidence at protein level"/>
<organism>
    <name type="scientific">Phleum pratense</name>
    <name type="common">Common timothy</name>
    <dbReference type="NCBI Taxonomy" id="15957"/>
    <lineage>
        <taxon>Eukaryota</taxon>
        <taxon>Viridiplantae</taxon>
        <taxon>Streptophyta</taxon>
        <taxon>Embryophyta</taxon>
        <taxon>Tracheophyta</taxon>
        <taxon>Spermatophyta</taxon>
        <taxon>Magnoliopsida</taxon>
        <taxon>Liliopsida</taxon>
        <taxon>Poales</taxon>
        <taxon>Poaceae</taxon>
        <taxon>BOP clade</taxon>
        <taxon>Pooideae</taxon>
        <taxon>Poodae</taxon>
        <taxon>Poeae</taxon>
        <taxon>Poeae Chloroplast Group 2 (Poeae type)</taxon>
        <taxon>Poodinae</taxon>
        <taxon>Phleinae</taxon>
        <taxon>Phleum</taxon>
    </lineage>
</organism>
<dbReference type="EMBL" id="AF521563">
    <property type="protein sequence ID" value="AAN32987.1"/>
    <property type="molecule type" value="mRNA"/>
</dbReference>
<dbReference type="SMR" id="Q8H6L7"/>
<dbReference type="Allergome" id="3415">
    <property type="allergen name" value="Phl p 11.0101"/>
</dbReference>
<dbReference type="Allergome" id="552">
    <property type="allergen name" value="Phl p 11"/>
</dbReference>
<dbReference type="ABCD" id="Q8H6L7">
    <property type="antibodies" value="4 sequenced antibodies"/>
</dbReference>
<dbReference type="GO" id="GO:0005615">
    <property type="term" value="C:extracellular space"/>
    <property type="evidence" value="ECO:0007669"/>
    <property type="project" value="InterPro"/>
</dbReference>
<dbReference type="InterPro" id="IPR006040">
    <property type="entry name" value="Allergen_Ole_e_I_CS"/>
</dbReference>
<dbReference type="InterPro" id="IPR006041">
    <property type="entry name" value="Pollen_Ole_e1_allergen"/>
</dbReference>
<dbReference type="PANTHER" id="PTHR31614:SF12">
    <property type="entry name" value="OS06G0556600 PROTEIN"/>
    <property type="match status" value="1"/>
</dbReference>
<dbReference type="PANTHER" id="PTHR31614">
    <property type="entry name" value="PROTEIN DOWNSTREAM OF FLC-RELATED"/>
    <property type="match status" value="1"/>
</dbReference>
<dbReference type="Pfam" id="PF01190">
    <property type="entry name" value="Pollen_Ole_e_1"/>
    <property type="match status" value="1"/>
</dbReference>
<dbReference type="PROSITE" id="PS00925">
    <property type="entry name" value="OLEEI"/>
    <property type="match status" value="1"/>
</dbReference>